<accession>C3KVS9</accession>
<feature type="chain" id="PRO_1000215281" description="DNA integrity scanning protein DisA">
    <location>
        <begin position="1"/>
        <end position="353"/>
    </location>
</feature>
<feature type="domain" description="DAC" evidence="2">
    <location>
        <begin position="6"/>
        <end position="144"/>
    </location>
</feature>
<feature type="binding site" evidence="1">
    <location>
        <position position="73"/>
    </location>
    <ligand>
        <name>ATP</name>
        <dbReference type="ChEBI" id="CHEBI:30616"/>
    </ligand>
</feature>
<feature type="binding site" evidence="1">
    <location>
        <position position="91"/>
    </location>
    <ligand>
        <name>ATP</name>
        <dbReference type="ChEBI" id="CHEBI:30616"/>
    </ligand>
</feature>
<feature type="binding site" evidence="1">
    <location>
        <begin position="104"/>
        <end position="108"/>
    </location>
    <ligand>
        <name>ATP</name>
        <dbReference type="ChEBI" id="CHEBI:30616"/>
    </ligand>
</feature>
<proteinExistence type="inferred from homology"/>
<protein>
    <recommendedName>
        <fullName evidence="1">DNA integrity scanning protein DisA</fullName>
    </recommendedName>
    <alternativeName>
        <fullName evidence="1">Cyclic di-AMP synthase</fullName>
        <shortName evidence="1">c-di-AMP synthase</shortName>
    </alternativeName>
    <alternativeName>
        <fullName evidence="1">Diadenylate cyclase</fullName>
        <ecNumber evidence="1">2.7.7.85</ecNumber>
    </alternativeName>
</protein>
<keyword id="KW-0067">ATP-binding</keyword>
<keyword id="KW-0227">DNA damage</keyword>
<keyword id="KW-0234">DNA repair</keyword>
<keyword id="KW-0238">DNA-binding</keyword>
<keyword id="KW-0460">Magnesium</keyword>
<keyword id="KW-0547">Nucleotide-binding</keyword>
<keyword id="KW-0548">Nucleotidyltransferase</keyword>
<keyword id="KW-0808">Transferase</keyword>
<organism>
    <name type="scientific">Clostridium botulinum (strain 657 / Type Ba4)</name>
    <dbReference type="NCBI Taxonomy" id="515621"/>
    <lineage>
        <taxon>Bacteria</taxon>
        <taxon>Bacillati</taxon>
        <taxon>Bacillota</taxon>
        <taxon>Clostridia</taxon>
        <taxon>Eubacteriales</taxon>
        <taxon>Clostridiaceae</taxon>
        <taxon>Clostridium</taxon>
    </lineage>
</organism>
<sequence>MRIEKDKELMNILKIMAPGTPLREGLENILRAKTGGLLILGDSDQILKLVDGGFKINSEYSPSYVYELAKMDGSIVLSSDLKKILCANAQLIPDSSIPTFETGTRHRTADRVAKQTGAIVIAISQRRNIITVYKGGIKYVLRDSSIILARANQALQTLEKYVAVLDRVVNNLNILEFKDIATLFDVLTAIQRSEMVMRIVSEIERYICELGNEGRLIDMQLSELIKSVEEDGILLIRDYCRSNMEYEDIYKQIQGLSSEELLNLDGLSKIIGYTGVPLVDTLISPRGYRMINKIPRIPSNVIENLVANFNQLKCVMEASYEQLDNVEGIGEARAKAIKNGLRRLREQIMLDKV</sequence>
<gene>
    <name evidence="1" type="primary">disA</name>
    <name type="ordered locus">CLJ_B3819</name>
</gene>
<comment type="function">
    <text evidence="1">Participates in a DNA-damage check-point that is active prior to asymmetric division when DNA is damaged. DisA forms globular foci that rapidly scan along the chromosomes during sporulation, searching for lesions. When a lesion is present, DisA pauses at the lesion site. This triggers a cellular response that culminates in a temporary block in sporulation initiation.</text>
</comment>
<comment type="function">
    <text evidence="1">Also has diadenylate cyclase activity, catalyzing the condensation of 2 ATP molecules into cyclic di-AMP (c-di-AMP). c-di-AMP acts as a signaling molecule that couples DNA integrity with progression of sporulation. The rise in c-di-AMP level generated by DisA while scanning the chromosome, operates as a positive signal that advances sporulation; upon encountering a lesion, the DisA focus arrests at the damaged site and halts c-di-AMP synthesis.</text>
</comment>
<comment type="catalytic activity">
    <reaction evidence="1">
        <text>2 ATP = 3',3'-c-di-AMP + 2 diphosphate</text>
        <dbReference type="Rhea" id="RHEA:35655"/>
        <dbReference type="ChEBI" id="CHEBI:30616"/>
        <dbReference type="ChEBI" id="CHEBI:33019"/>
        <dbReference type="ChEBI" id="CHEBI:71500"/>
        <dbReference type="EC" id="2.7.7.85"/>
    </reaction>
</comment>
<comment type="cofactor">
    <cofactor evidence="1">
        <name>Mg(2+)</name>
        <dbReference type="ChEBI" id="CHEBI:18420"/>
    </cofactor>
</comment>
<comment type="subunit">
    <text evidence="1">Homooctamer.</text>
</comment>
<comment type="similarity">
    <text evidence="1">Belongs to the DisA family.</text>
</comment>
<evidence type="ECO:0000255" key="1">
    <source>
        <dbReference type="HAMAP-Rule" id="MF_01438"/>
    </source>
</evidence>
<evidence type="ECO:0000255" key="2">
    <source>
        <dbReference type="PROSITE-ProRule" id="PRU01130"/>
    </source>
</evidence>
<reference key="1">
    <citation type="submission" date="2008-05" db="EMBL/GenBank/DDBJ databases">
        <title>Genome sequence of Clostridium botulinum Ba4 strain 657.</title>
        <authorList>
            <person name="Shrivastava S."/>
            <person name="Brown J.L."/>
            <person name="Bruce D."/>
            <person name="Detter C."/>
            <person name="Munk C."/>
            <person name="Smith L.A."/>
            <person name="Smith T.J."/>
            <person name="Sutton G."/>
            <person name="Brettin T.S."/>
        </authorList>
    </citation>
    <scope>NUCLEOTIDE SEQUENCE [LARGE SCALE GENOMIC DNA]</scope>
    <source>
        <strain>657 / Type Ba4</strain>
    </source>
</reference>
<dbReference type="EC" id="2.7.7.85" evidence="1"/>
<dbReference type="EMBL" id="CP001083">
    <property type="protein sequence ID" value="ACQ52434.1"/>
    <property type="molecule type" value="Genomic_DNA"/>
</dbReference>
<dbReference type="RefSeq" id="WP_003360171.1">
    <property type="nucleotide sequence ID" value="NC_012658.1"/>
</dbReference>
<dbReference type="SMR" id="C3KVS9"/>
<dbReference type="KEGG" id="cbi:CLJ_B3819"/>
<dbReference type="HOGENOM" id="CLU_787128_0_0_9"/>
<dbReference type="Proteomes" id="UP000002333">
    <property type="component" value="Chromosome"/>
</dbReference>
<dbReference type="GO" id="GO:0004016">
    <property type="term" value="F:adenylate cyclase activity"/>
    <property type="evidence" value="ECO:0007669"/>
    <property type="project" value="TreeGrafter"/>
</dbReference>
<dbReference type="GO" id="GO:0005524">
    <property type="term" value="F:ATP binding"/>
    <property type="evidence" value="ECO:0007669"/>
    <property type="project" value="UniProtKB-UniRule"/>
</dbReference>
<dbReference type="GO" id="GO:0106408">
    <property type="term" value="F:diadenylate cyclase activity"/>
    <property type="evidence" value="ECO:0007669"/>
    <property type="project" value="UniProtKB-EC"/>
</dbReference>
<dbReference type="GO" id="GO:0003677">
    <property type="term" value="F:DNA binding"/>
    <property type="evidence" value="ECO:0007669"/>
    <property type="project" value="UniProtKB-UniRule"/>
</dbReference>
<dbReference type="GO" id="GO:0006281">
    <property type="term" value="P:DNA repair"/>
    <property type="evidence" value="ECO:0007669"/>
    <property type="project" value="UniProtKB-UniRule"/>
</dbReference>
<dbReference type="FunFam" id="1.10.150.20:FF:000023">
    <property type="entry name" value="DNA integrity scanning protein DisA"/>
    <property type="match status" value="1"/>
</dbReference>
<dbReference type="FunFam" id="3.40.1700.10:FF:000001">
    <property type="entry name" value="DNA integrity scanning protein DisA"/>
    <property type="match status" value="1"/>
</dbReference>
<dbReference type="Gene3D" id="1.10.150.20">
    <property type="entry name" value="5' to 3' exonuclease, C-terminal subdomain"/>
    <property type="match status" value="1"/>
</dbReference>
<dbReference type="Gene3D" id="1.20.1260.110">
    <property type="entry name" value="DNA integrity scanning linker region"/>
    <property type="match status" value="1"/>
</dbReference>
<dbReference type="Gene3D" id="3.40.1700.10">
    <property type="entry name" value="DNA integrity scanning protein, DisA, N-terminal domain"/>
    <property type="match status" value="1"/>
</dbReference>
<dbReference type="HAMAP" id="MF_01438">
    <property type="entry name" value="DisA"/>
    <property type="match status" value="1"/>
</dbReference>
<dbReference type="InterPro" id="IPR050338">
    <property type="entry name" value="DisA"/>
</dbReference>
<dbReference type="InterPro" id="IPR038331">
    <property type="entry name" value="DisA_sf"/>
</dbReference>
<dbReference type="InterPro" id="IPR036888">
    <property type="entry name" value="DNA_integrity_DisA_N_sf"/>
</dbReference>
<dbReference type="InterPro" id="IPR018906">
    <property type="entry name" value="DNA_integrity_scan_DisA_link"/>
</dbReference>
<dbReference type="InterPro" id="IPR003390">
    <property type="entry name" value="DNA_integrity_scan_DisA_N"/>
</dbReference>
<dbReference type="InterPro" id="IPR023763">
    <property type="entry name" value="DNA_integrity_scanning_protein"/>
</dbReference>
<dbReference type="InterPro" id="IPR010994">
    <property type="entry name" value="RuvA_2-like"/>
</dbReference>
<dbReference type="NCBIfam" id="NF010009">
    <property type="entry name" value="PRK13482.1"/>
    <property type="match status" value="1"/>
</dbReference>
<dbReference type="PANTHER" id="PTHR34185">
    <property type="entry name" value="DIADENYLATE CYCLASE"/>
    <property type="match status" value="1"/>
</dbReference>
<dbReference type="PANTHER" id="PTHR34185:SF3">
    <property type="entry name" value="DNA INTEGRITY SCANNING PROTEIN DISA"/>
    <property type="match status" value="1"/>
</dbReference>
<dbReference type="Pfam" id="PF02457">
    <property type="entry name" value="DAC"/>
    <property type="match status" value="1"/>
</dbReference>
<dbReference type="Pfam" id="PF10635">
    <property type="entry name" value="DisA-linker"/>
    <property type="match status" value="1"/>
</dbReference>
<dbReference type="SUPFAM" id="SSF47781">
    <property type="entry name" value="RuvA domain 2-like"/>
    <property type="match status" value="1"/>
</dbReference>
<dbReference type="SUPFAM" id="SSF143597">
    <property type="entry name" value="YojJ-like"/>
    <property type="match status" value="1"/>
</dbReference>
<dbReference type="PROSITE" id="PS51794">
    <property type="entry name" value="DAC"/>
    <property type="match status" value="1"/>
</dbReference>
<name>DISA_CLOB6</name>